<protein>
    <recommendedName>
        <fullName evidence="1">Cysteine--tRNA ligase</fullName>
        <ecNumber evidence="1">6.1.1.16</ecNumber>
    </recommendedName>
    <alternativeName>
        <fullName evidence="1">Cysteinyl-tRNA synthetase</fullName>
        <shortName evidence="1">CysRS</shortName>
    </alternativeName>
</protein>
<gene>
    <name evidence="1" type="primary">cysS</name>
    <name type="ordered locus">BCAH187_A0120</name>
</gene>
<comment type="catalytic activity">
    <reaction evidence="1">
        <text>tRNA(Cys) + L-cysteine + ATP = L-cysteinyl-tRNA(Cys) + AMP + diphosphate</text>
        <dbReference type="Rhea" id="RHEA:17773"/>
        <dbReference type="Rhea" id="RHEA-COMP:9661"/>
        <dbReference type="Rhea" id="RHEA-COMP:9679"/>
        <dbReference type="ChEBI" id="CHEBI:30616"/>
        <dbReference type="ChEBI" id="CHEBI:33019"/>
        <dbReference type="ChEBI" id="CHEBI:35235"/>
        <dbReference type="ChEBI" id="CHEBI:78442"/>
        <dbReference type="ChEBI" id="CHEBI:78517"/>
        <dbReference type="ChEBI" id="CHEBI:456215"/>
        <dbReference type="EC" id="6.1.1.16"/>
    </reaction>
</comment>
<comment type="cofactor">
    <cofactor evidence="1">
        <name>Zn(2+)</name>
        <dbReference type="ChEBI" id="CHEBI:29105"/>
    </cofactor>
    <text evidence="1">Binds 1 zinc ion per subunit.</text>
</comment>
<comment type="subunit">
    <text evidence="1">Monomer.</text>
</comment>
<comment type="subcellular location">
    <subcellularLocation>
        <location evidence="1">Cytoplasm</location>
    </subcellularLocation>
</comment>
<comment type="similarity">
    <text evidence="1">Belongs to the class-I aminoacyl-tRNA synthetase family.</text>
</comment>
<evidence type="ECO:0000255" key="1">
    <source>
        <dbReference type="HAMAP-Rule" id="MF_00041"/>
    </source>
</evidence>
<reference key="1">
    <citation type="submission" date="2008-10" db="EMBL/GenBank/DDBJ databases">
        <title>Genome sequence of Bacillus cereus AH187.</title>
        <authorList>
            <person name="Dodson R.J."/>
            <person name="Durkin A.S."/>
            <person name="Rosovitz M.J."/>
            <person name="Rasko D.A."/>
            <person name="Kolsto A.B."/>
            <person name="Okstad O.A."/>
            <person name="Ravel J."/>
            <person name="Sutton G."/>
        </authorList>
    </citation>
    <scope>NUCLEOTIDE SEQUENCE [LARGE SCALE GENOMIC DNA]</scope>
    <source>
        <strain>AH187</strain>
    </source>
</reference>
<accession>B7HQS4</accession>
<proteinExistence type="inferred from homology"/>
<feature type="chain" id="PRO_1000199037" description="Cysteine--tRNA ligase">
    <location>
        <begin position="1"/>
        <end position="465"/>
    </location>
</feature>
<feature type="short sequence motif" description="'HIGH' region">
    <location>
        <begin position="31"/>
        <end position="41"/>
    </location>
</feature>
<feature type="short sequence motif" description="'KMSKS' region">
    <location>
        <begin position="266"/>
        <end position="270"/>
    </location>
</feature>
<feature type="binding site" evidence="1">
    <location>
        <position position="29"/>
    </location>
    <ligand>
        <name>Zn(2+)</name>
        <dbReference type="ChEBI" id="CHEBI:29105"/>
    </ligand>
</feature>
<feature type="binding site" evidence="1">
    <location>
        <position position="209"/>
    </location>
    <ligand>
        <name>Zn(2+)</name>
        <dbReference type="ChEBI" id="CHEBI:29105"/>
    </ligand>
</feature>
<feature type="binding site" evidence="1">
    <location>
        <position position="234"/>
    </location>
    <ligand>
        <name>Zn(2+)</name>
        <dbReference type="ChEBI" id="CHEBI:29105"/>
    </ligand>
</feature>
<feature type="binding site" evidence="1">
    <location>
        <position position="238"/>
    </location>
    <ligand>
        <name>Zn(2+)</name>
        <dbReference type="ChEBI" id="CHEBI:29105"/>
    </ligand>
</feature>
<feature type="binding site" evidence="1">
    <location>
        <position position="269"/>
    </location>
    <ligand>
        <name>ATP</name>
        <dbReference type="ChEBI" id="CHEBI:30616"/>
    </ligand>
</feature>
<feature type="modified residue" description="Phosphoserine" evidence="1">
    <location>
        <position position="270"/>
    </location>
</feature>
<name>SYC_BACC7</name>
<sequence length="465" mass="53976">MTIHIYNTLTRQKEEFIPLEENKVKMYVCGPTVYNYIHIGNARPPMVFDTVRRYLEYKGYDVQYVSNFTDVDDKLIKAANELGEDVPTIADRFVEAYFEDVTALGCKHATVHPRVTENMDIIIEFIQELVNKGYAYESEGDVYFRTKEFEGYGKLSHQPIADLRHGARIEVGEKKQDPLDFALWKAAKEGEIFWESPWGQGRPGWHIECSAMARKYLGDTIDIHAGGQDLAFPHHENEIAQSEALTGKTFARYWMHNGYININNEKMSKSLGNFILVHDIIKQYDPQLIRFFMLSVHYRHPINFSEELLRSTNNGLERIKTAYGNLKHRMESSTDLTDHDEKWLADLKKFQTAFEEAMNDDFNTANAITELYNVANHANQYLLEEHTSTVVIQAYVKQLETLFDILGLELAQEELLDEEIEALIQKRIEARKNRDFALSDQIRDDLKDRNIILEDTAQGTRWKRG</sequence>
<keyword id="KW-0030">Aminoacyl-tRNA synthetase</keyword>
<keyword id="KW-0067">ATP-binding</keyword>
<keyword id="KW-0963">Cytoplasm</keyword>
<keyword id="KW-0436">Ligase</keyword>
<keyword id="KW-0479">Metal-binding</keyword>
<keyword id="KW-0547">Nucleotide-binding</keyword>
<keyword id="KW-0597">Phosphoprotein</keyword>
<keyword id="KW-0648">Protein biosynthesis</keyword>
<keyword id="KW-0862">Zinc</keyword>
<organism>
    <name type="scientific">Bacillus cereus (strain AH187)</name>
    <dbReference type="NCBI Taxonomy" id="405534"/>
    <lineage>
        <taxon>Bacteria</taxon>
        <taxon>Bacillati</taxon>
        <taxon>Bacillota</taxon>
        <taxon>Bacilli</taxon>
        <taxon>Bacillales</taxon>
        <taxon>Bacillaceae</taxon>
        <taxon>Bacillus</taxon>
        <taxon>Bacillus cereus group</taxon>
    </lineage>
</organism>
<dbReference type="EC" id="6.1.1.16" evidence="1"/>
<dbReference type="EMBL" id="CP001177">
    <property type="protein sequence ID" value="ACJ80620.1"/>
    <property type="molecule type" value="Genomic_DNA"/>
</dbReference>
<dbReference type="SMR" id="B7HQS4"/>
<dbReference type="KEGG" id="bcr:BCAH187_A0120"/>
<dbReference type="HOGENOM" id="CLU_013528_0_1_9"/>
<dbReference type="Proteomes" id="UP000002214">
    <property type="component" value="Chromosome"/>
</dbReference>
<dbReference type="GO" id="GO:0005829">
    <property type="term" value="C:cytosol"/>
    <property type="evidence" value="ECO:0007669"/>
    <property type="project" value="TreeGrafter"/>
</dbReference>
<dbReference type="GO" id="GO:0005524">
    <property type="term" value="F:ATP binding"/>
    <property type="evidence" value="ECO:0007669"/>
    <property type="project" value="UniProtKB-UniRule"/>
</dbReference>
<dbReference type="GO" id="GO:0004817">
    <property type="term" value="F:cysteine-tRNA ligase activity"/>
    <property type="evidence" value="ECO:0007669"/>
    <property type="project" value="UniProtKB-UniRule"/>
</dbReference>
<dbReference type="GO" id="GO:0008270">
    <property type="term" value="F:zinc ion binding"/>
    <property type="evidence" value="ECO:0007669"/>
    <property type="project" value="UniProtKB-UniRule"/>
</dbReference>
<dbReference type="GO" id="GO:0006423">
    <property type="term" value="P:cysteinyl-tRNA aminoacylation"/>
    <property type="evidence" value="ECO:0007669"/>
    <property type="project" value="UniProtKB-UniRule"/>
</dbReference>
<dbReference type="CDD" id="cd00672">
    <property type="entry name" value="CysRS_core"/>
    <property type="match status" value="1"/>
</dbReference>
<dbReference type="FunFam" id="1.20.120.1910:FF:000002">
    <property type="entry name" value="Cysteine--tRNA ligase"/>
    <property type="match status" value="1"/>
</dbReference>
<dbReference type="FunFam" id="3.40.50.620:FF:000009">
    <property type="entry name" value="Cysteine--tRNA ligase"/>
    <property type="match status" value="1"/>
</dbReference>
<dbReference type="Gene3D" id="1.20.120.1910">
    <property type="entry name" value="Cysteine-tRNA ligase, C-terminal anti-codon recognition domain"/>
    <property type="match status" value="1"/>
</dbReference>
<dbReference type="Gene3D" id="3.40.50.620">
    <property type="entry name" value="HUPs"/>
    <property type="match status" value="1"/>
</dbReference>
<dbReference type="HAMAP" id="MF_00041">
    <property type="entry name" value="Cys_tRNA_synth"/>
    <property type="match status" value="1"/>
</dbReference>
<dbReference type="InterPro" id="IPR015803">
    <property type="entry name" value="Cys-tRNA-ligase"/>
</dbReference>
<dbReference type="InterPro" id="IPR015273">
    <property type="entry name" value="Cys-tRNA-synt_Ia_DALR"/>
</dbReference>
<dbReference type="InterPro" id="IPR024909">
    <property type="entry name" value="Cys-tRNA/MSH_ligase"/>
</dbReference>
<dbReference type="InterPro" id="IPR014729">
    <property type="entry name" value="Rossmann-like_a/b/a_fold"/>
</dbReference>
<dbReference type="InterPro" id="IPR032678">
    <property type="entry name" value="tRNA-synt_1_cat_dom"/>
</dbReference>
<dbReference type="InterPro" id="IPR009080">
    <property type="entry name" value="tRNAsynth_Ia_anticodon-bd"/>
</dbReference>
<dbReference type="NCBIfam" id="TIGR00435">
    <property type="entry name" value="cysS"/>
    <property type="match status" value="1"/>
</dbReference>
<dbReference type="PANTHER" id="PTHR10890:SF3">
    <property type="entry name" value="CYSTEINE--TRNA LIGASE, CYTOPLASMIC"/>
    <property type="match status" value="1"/>
</dbReference>
<dbReference type="PANTHER" id="PTHR10890">
    <property type="entry name" value="CYSTEINYL-TRNA SYNTHETASE"/>
    <property type="match status" value="1"/>
</dbReference>
<dbReference type="Pfam" id="PF09190">
    <property type="entry name" value="DALR_2"/>
    <property type="match status" value="1"/>
</dbReference>
<dbReference type="Pfam" id="PF01406">
    <property type="entry name" value="tRNA-synt_1e"/>
    <property type="match status" value="1"/>
</dbReference>
<dbReference type="PRINTS" id="PR00983">
    <property type="entry name" value="TRNASYNTHCYS"/>
</dbReference>
<dbReference type="SMART" id="SM00840">
    <property type="entry name" value="DALR_2"/>
    <property type="match status" value="1"/>
</dbReference>
<dbReference type="SUPFAM" id="SSF47323">
    <property type="entry name" value="Anticodon-binding domain of a subclass of class I aminoacyl-tRNA synthetases"/>
    <property type="match status" value="1"/>
</dbReference>
<dbReference type="SUPFAM" id="SSF52374">
    <property type="entry name" value="Nucleotidylyl transferase"/>
    <property type="match status" value="1"/>
</dbReference>